<reference key="1">
    <citation type="submission" date="2005-08" db="EMBL/GenBank/DDBJ databases">
        <authorList>
            <consortium name="NIH - Mammalian Gene Collection (MGC) project"/>
        </authorList>
    </citation>
    <scope>NUCLEOTIDE SEQUENCE [LARGE SCALE MRNA]</scope>
    <source>
        <strain>Crossbred X Angus</strain>
        <tissue>Ileum</tissue>
    </source>
</reference>
<proteinExistence type="evidence at transcript level"/>
<gene>
    <name type="primary">CHTOP</name>
    <name type="synonym">FOP</name>
</gene>
<comment type="function">
    <text evidence="2 3">Plays an important role in the ligand-dependent activation of estrogen receptor target genes. May play a role in the silencing of fetal globin genes. Recruits the 5FMC complex to ZNF148, leading to desumoylation of ZNF148 and subsequent transactivation of ZNF148 target genes. Required for the tumorigenicity of glioblastoma cells. Binds to 5-hydroxymethylcytosine (5hmC) and associates with the methylosome complex containing PRMT1, PRMT5, MEP50 and ERH. The CHTOP-methylosome complex associated with 5hmC methylates H4R3 and transactivates genes involved in glioblastomagenesis (By similarity).</text>
</comment>
<comment type="subunit">
    <text evidence="2 3">Interacts with PRMT1 and PRMT5. Interacts with the 5FMC complex; the interaction is methylation-dependent. Interacts with FYTTD1, SET and PRC1 complex members CBX4, RNF2 and PHC2; the interactions are methylation-independent. Interacts with ZNF148. Interacts with WDR77 and ER (By similarity).</text>
</comment>
<comment type="subcellular location">
    <subcellularLocation>
        <location evidence="3">Nucleus</location>
    </subcellularLocation>
    <subcellularLocation>
        <location evidence="3">Nucleus</location>
        <location evidence="3">Nucleolus</location>
    </subcellularLocation>
    <subcellularLocation>
        <location evidence="3">Nucleus</location>
        <location evidence="3">Nucleoplasm</location>
    </subcellularLocation>
    <subcellularLocation>
        <location evidence="3">Nucleus speckle</location>
    </subcellularLocation>
    <text evidence="2 3">Mostly associated with facultative heterochromatin (By similarity). Localizes to regions surrounding nuclear speckles known as perispeckles in which TREX complex assembly seems to occur (By similarity).</text>
</comment>
<comment type="PTM">
    <text evidence="2">Asymmetrically methylated by PRMT1. Symmetrically methylated by PRMT5 (By similarity).</text>
</comment>
<evidence type="ECO:0000250" key="1"/>
<evidence type="ECO:0000250" key="2">
    <source>
        <dbReference type="UniProtKB" id="Q9CY57"/>
    </source>
</evidence>
<evidence type="ECO:0000250" key="3">
    <source>
        <dbReference type="UniProtKB" id="Q9Y3Y2"/>
    </source>
</evidence>
<evidence type="ECO:0000256" key="4">
    <source>
        <dbReference type="SAM" id="MobiDB-lite"/>
    </source>
</evidence>
<feature type="initiator methionine" description="Removed" evidence="3">
    <location>
        <position position="1"/>
    </location>
</feature>
<feature type="chain" id="PRO_0000089262" description="Chromatin target of PRMT1 protein">
    <location>
        <begin position="2"/>
        <end position="248"/>
    </location>
</feature>
<feature type="region of interest" description="Disordered" evidence="4">
    <location>
        <begin position="151"/>
        <end position="204"/>
    </location>
</feature>
<feature type="region of interest" description="Interaction with PRMT1" evidence="1">
    <location>
        <begin position="153"/>
        <end position="206"/>
    </location>
</feature>
<feature type="short sequence motif" description="GAR motif; involved in 5hmC binding" evidence="3">
    <location>
        <begin position="194"/>
        <end position="203"/>
    </location>
</feature>
<feature type="compositionally biased region" description="Gly residues" evidence="4">
    <location>
        <begin position="157"/>
        <end position="195"/>
    </location>
</feature>
<feature type="modified residue" description="N-acetylalanine" evidence="3">
    <location>
        <position position="2"/>
    </location>
</feature>
<feature type="modified residue" description="Phosphoserine" evidence="3">
    <location>
        <position position="40"/>
    </location>
</feature>
<feature type="modified residue" description="Phosphoserine" evidence="3">
    <location>
        <position position="49"/>
    </location>
</feature>
<feature type="modified residue" description="Phosphoserine" evidence="3">
    <location>
        <position position="64"/>
    </location>
</feature>
<feature type="modified residue" description="Phosphothreonine" evidence="3">
    <location>
        <position position="242"/>
    </location>
</feature>
<feature type="cross-link" description="Glycyl lysine isopeptide (Lys-Gly) (interchain with G-Cter in SUMO2)" evidence="3">
    <location>
        <position position="70"/>
    </location>
</feature>
<dbReference type="EMBL" id="BC103347">
    <property type="protein sequence ID" value="AAI03348.1"/>
    <property type="molecule type" value="mRNA"/>
</dbReference>
<dbReference type="RefSeq" id="NP_001030558.1">
    <property type="nucleotide sequence ID" value="NM_001035481.2"/>
</dbReference>
<dbReference type="SMR" id="Q3SYW9"/>
<dbReference type="FunCoup" id="Q3SYW9">
    <property type="interactions" value="2403"/>
</dbReference>
<dbReference type="STRING" id="9913.ENSBTAP00000069496"/>
<dbReference type="PaxDb" id="9913-ENSBTAP00000033800"/>
<dbReference type="GeneID" id="616638"/>
<dbReference type="KEGG" id="bta:616638"/>
<dbReference type="CTD" id="26097"/>
<dbReference type="eggNOG" id="ENOG502QV0X">
    <property type="taxonomic scope" value="Eukaryota"/>
</dbReference>
<dbReference type="HOGENOM" id="CLU_087638_0_0_1"/>
<dbReference type="InParanoid" id="Q3SYW9"/>
<dbReference type="OrthoDB" id="446014at2759"/>
<dbReference type="TreeFam" id="TF331447"/>
<dbReference type="Proteomes" id="UP000009136">
    <property type="component" value="Unplaced"/>
</dbReference>
<dbReference type="GO" id="GO:0016607">
    <property type="term" value="C:nuclear speck"/>
    <property type="evidence" value="ECO:0000318"/>
    <property type="project" value="GO_Central"/>
</dbReference>
<dbReference type="GO" id="GO:0005730">
    <property type="term" value="C:nucleolus"/>
    <property type="evidence" value="ECO:0007669"/>
    <property type="project" value="UniProtKB-SubCell"/>
</dbReference>
<dbReference type="GO" id="GO:0008327">
    <property type="term" value="F:methyl-CpG binding"/>
    <property type="evidence" value="ECO:0000250"/>
    <property type="project" value="UniProtKB"/>
</dbReference>
<dbReference type="GO" id="GO:0003723">
    <property type="term" value="F:RNA binding"/>
    <property type="evidence" value="ECO:0007669"/>
    <property type="project" value="UniProtKB-KW"/>
</dbReference>
<dbReference type="GO" id="GO:0006338">
    <property type="term" value="P:chromatin remodeling"/>
    <property type="evidence" value="ECO:0000250"/>
    <property type="project" value="UniProtKB"/>
</dbReference>
<dbReference type="InterPro" id="IPR052656">
    <property type="entry name" value="CTOP_PRMT1"/>
</dbReference>
<dbReference type="InterPro" id="IPR025715">
    <property type="entry name" value="FoP_C"/>
</dbReference>
<dbReference type="PANTHER" id="PTHR48426">
    <property type="entry name" value="CHROMATIN TARGET OF PRMT1 PROTEIN"/>
    <property type="match status" value="1"/>
</dbReference>
<dbReference type="PANTHER" id="PTHR48426:SF1">
    <property type="entry name" value="CHROMATIN TARGET OF PRMT1 PROTEIN"/>
    <property type="match status" value="1"/>
</dbReference>
<dbReference type="Pfam" id="PF13865">
    <property type="entry name" value="FoP_duplication"/>
    <property type="match status" value="1"/>
</dbReference>
<dbReference type="SMART" id="SM01218">
    <property type="entry name" value="FoP_duplication"/>
    <property type="match status" value="1"/>
</dbReference>
<protein>
    <recommendedName>
        <fullName>Chromatin target of PRMT1 protein</fullName>
    </recommendedName>
    <alternativeName>
        <fullName>Friend of PRMT1 protein</fullName>
    </alternativeName>
    <alternativeName>
        <fullName>Small arginine- and glycine-rich protein</fullName>
        <shortName>SRAG</shortName>
    </alternativeName>
</protein>
<keyword id="KW-0007">Acetylation</keyword>
<keyword id="KW-1017">Isopeptide bond</keyword>
<keyword id="KW-0488">Methylation</keyword>
<keyword id="KW-0539">Nucleus</keyword>
<keyword id="KW-0597">Phosphoprotein</keyword>
<keyword id="KW-1185">Reference proteome</keyword>
<keyword id="KW-0694">RNA-binding</keyword>
<keyword id="KW-0804">Transcription</keyword>
<keyword id="KW-0805">Transcription regulation</keyword>
<keyword id="KW-0832">Ubl conjugation</keyword>
<name>CHTOP_BOVIN</name>
<organism>
    <name type="scientific">Bos taurus</name>
    <name type="common">Bovine</name>
    <dbReference type="NCBI Taxonomy" id="9913"/>
    <lineage>
        <taxon>Eukaryota</taxon>
        <taxon>Metazoa</taxon>
        <taxon>Chordata</taxon>
        <taxon>Craniata</taxon>
        <taxon>Vertebrata</taxon>
        <taxon>Euteleostomi</taxon>
        <taxon>Mammalia</taxon>
        <taxon>Eutheria</taxon>
        <taxon>Laurasiatheria</taxon>
        <taxon>Artiodactyla</taxon>
        <taxon>Ruminantia</taxon>
        <taxon>Pecora</taxon>
        <taxon>Bovidae</taxon>
        <taxon>Bovinae</taxon>
        <taxon>Bos</taxon>
    </lineage>
</organism>
<accession>Q3SYW9</accession>
<sequence>MAAQSAPKVVLKSTTKMSLNERFTNMLKNKQPMPVNIRASMQQQQQLASARNRRLAQQMENRPSVQAALKLKQSLKQRLGKSNIQARLGRPIGALARGAIGGRGLPIIQRGLPRGGLRGGRATRTLLRGGMSLRGQNLLRGGRAVAPRMGLRRGGVRGRGGPGRGGLGRGAMGRGGIGGRGRGMIGRGRGGFGGRGRGRGRGRGALARPVLTKEQLDNQLDAYMSKTKGHLDAELDAYMAQTDPETND</sequence>